<feature type="chain" id="PRO_0000253460" description="Deoxynucleotide monophosphate kinase">
    <location>
        <begin position="1"/>
        <end position="244"/>
    </location>
</feature>
<feature type="binding site" evidence="1">
    <location>
        <position position="10"/>
    </location>
    <ligand>
        <name>dGMP</name>
        <dbReference type="ChEBI" id="CHEBI:57673"/>
    </ligand>
</feature>
<feature type="binding site" evidence="1">
    <location>
        <position position="11"/>
    </location>
    <ligand>
        <name>ATP</name>
        <dbReference type="ChEBI" id="CHEBI:30616"/>
    </ligand>
</feature>
<feature type="binding site" evidence="1">
    <location>
        <position position="13"/>
    </location>
    <ligand>
        <name>ATP</name>
        <dbReference type="ChEBI" id="CHEBI:30616"/>
    </ligand>
</feature>
<feature type="binding site" evidence="1">
    <location>
        <position position="15"/>
    </location>
    <ligand>
        <name>ATP</name>
        <dbReference type="ChEBI" id="CHEBI:30616"/>
    </ligand>
</feature>
<feature type="binding site" evidence="1">
    <location>
        <position position="16"/>
    </location>
    <ligand>
        <name>ATP</name>
        <dbReference type="ChEBI" id="CHEBI:30616"/>
    </ligand>
</feature>
<feature type="binding site" evidence="1">
    <location>
        <position position="36"/>
    </location>
    <ligand>
        <name>dGMP</name>
        <dbReference type="ChEBI" id="CHEBI:57673"/>
    </ligand>
</feature>
<feature type="binding site" evidence="1">
    <location>
        <position position="37"/>
    </location>
    <ligand>
        <name>dGMP</name>
        <dbReference type="ChEBI" id="CHEBI:57673"/>
    </ligand>
</feature>
<feature type="binding site" evidence="1">
    <location>
        <position position="70"/>
    </location>
    <ligand>
        <name>dGMP</name>
        <dbReference type="ChEBI" id="CHEBI:57673"/>
    </ligand>
</feature>
<feature type="binding site" evidence="1">
    <location>
        <position position="137"/>
    </location>
    <ligand>
        <name>dGMP</name>
        <dbReference type="ChEBI" id="CHEBI:57673"/>
    </ligand>
</feature>
<feature type="binding site" evidence="1">
    <location>
        <position position="144"/>
    </location>
    <ligand>
        <name>dGMP</name>
        <dbReference type="ChEBI" id="CHEBI:57673"/>
    </ligand>
</feature>
<feature type="binding site" evidence="1">
    <location>
        <position position="145"/>
    </location>
    <ligand>
        <name>dGMP</name>
        <dbReference type="ChEBI" id="CHEBI:57673"/>
    </ligand>
</feature>
<feature type="binding site" evidence="1">
    <location>
        <position position="149"/>
    </location>
    <ligand>
        <name>dGMP</name>
        <dbReference type="ChEBI" id="CHEBI:57673"/>
    </ligand>
</feature>
<feature type="binding site" evidence="1">
    <location>
        <position position="157"/>
    </location>
    <ligand>
        <name>dGMP</name>
        <dbReference type="ChEBI" id="CHEBI:57673"/>
    </ligand>
</feature>
<feature type="binding site" evidence="1">
    <location>
        <position position="180"/>
    </location>
    <ligand>
        <name>dGMP</name>
        <dbReference type="ChEBI" id="CHEBI:57673"/>
    </ligand>
</feature>
<feature type="binding site" evidence="1">
    <location>
        <position position="182"/>
    </location>
    <ligand>
        <name>dGMP</name>
        <dbReference type="ChEBI" id="CHEBI:57673"/>
    </ligand>
</feature>
<feature type="binding site" evidence="1">
    <location>
        <position position="183"/>
    </location>
    <ligand>
        <name>dGMP</name>
        <dbReference type="ChEBI" id="CHEBI:57673"/>
    </ligand>
</feature>
<feature type="binding site" evidence="1">
    <location>
        <position position="186"/>
    </location>
    <ligand>
        <name>dGMP</name>
        <dbReference type="ChEBI" id="CHEBI:57673"/>
    </ligand>
</feature>
<feature type="binding site" evidence="1">
    <location>
        <position position="213"/>
    </location>
    <ligand>
        <name>dGMP</name>
        <dbReference type="ChEBI" id="CHEBI:57673"/>
    </ligand>
</feature>
<accession>Q7Y4Y9</accession>
<organism>
    <name type="scientific">Escherichia phage RB69</name>
    <name type="common">Bacteriophage RB69</name>
    <dbReference type="NCBI Taxonomy" id="12353"/>
    <lineage>
        <taxon>Viruses</taxon>
        <taxon>Duplodnaviria</taxon>
        <taxon>Heunggongvirae</taxon>
        <taxon>Uroviricota</taxon>
        <taxon>Caudoviricetes</taxon>
        <taxon>Straboviridae</taxon>
        <taxon>Tevenvirinae</taxon>
        <taxon>Mosigvirus</taxon>
        <taxon>Mosigvirus RB69</taxon>
    </lineage>
</organism>
<keyword id="KW-0067">ATP-binding</keyword>
<keyword id="KW-0235">DNA replication</keyword>
<keyword id="KW-0418">Kinase</keyword>
<keyword id="KW-0547">Nucleotide-binding</keyword>
<keyword id="KW-1185">Reference proteome</keyword>
<keyword id="KW-0808">Transferase</keyword>
<keyword id="KW-1194">Viral DNA replication</keyword>
<protein>
    <recommendedName>
        <fullName>Deoxynucleotide monophosphate kinase</fullName>
        <shortName>DNK</shortName>
        <shortName>dNMP kinase</shortName>
        <ecNumber evidence="1">2.7.4.-</ecNumber>
    </recommendedName>
    <alternativeName>
        <fullName>Gp1</fullName>
    </alternativeName>
</protein>
<sequence length="244" mass="28154">MELIFLSGIKRSGKDTTADYINSNFKSIKYQLAYPIKDALAIAWERKHAENPDVFTELKYEYFEGIGYDRETPLNLNKLDVIELMEETLIYLQRQYLPINGVNILSSLEGGYSYLDIKPYEALREAINNINDTWSIRRLMQALGTDVVVNLFDRMYWVKLFALNYMDYIGSDFDYYVVTDTRQVHEMETARAMGATVIHVVRSGTESTDKHITEAGLPIEEGDLVITNDGSLEELYSKIEKILR</sequence>
<name>DNMK_BPR69</name>
<gene>
    <name type="primary">1</name>
</gene>
<comment type="function">
    <text evidence="1 2">Allows the synthesis of deoxyribonucleoside triphosphates necessary for the rapid viral DNA replication (By similarity). Phosphorylates dGMP, dTMP and 5-hydroxymethyl-dCMP (hmdCMP) while excluding dCMP and dAMP. The phosphorylation of 5-hydroxymethyl-dCMP represents the first step in the replacement of cytosine by hydroxymethylcytosine in new viral DNA genomes (By similarity).</text>
</comment>
<comment type="catalytic activity">
    <reaction evidence="1">
        <text>dTMP + ATP = dTDP + ADP</text>
        <dbReference type="Rhea" id="RHEA:13517"/>
        <dbReference type="ChEBI" id="CHEBI:30616"/>
        <dbReference type="ChEBI" id="CHEBI:58369"/>
        <dbReference type="ChEBI" id="CHEBI:63528"/>
        <dbReference type="ChEBI" id="CHEBI:456216"/>
    </reaction>
    <physiologicalReaction direction="left-to-right" evidence="1">
        <dbReference type="Rhea" id="RHEA:13518"/>
    </physiologicalReaction>
</comment>
<comment type="catalytic activity">
    <reaction evidence="1">
        <text>dGMP + ATP = dGDP + ADP</text>
        <dbReference type="Rhea" id="RHEA:12697"/>
        <dbReference type="ChEBI" id="CHEBI:30616"/>
        <dbReference type="ChEBI" id="CHEBI:57673"/>
        <dbReference type="ChEBI" id="CHEBI:58595"/>
        <dbReference type="ChEBI" id="CHEBI:456216"/>
    </reaction>
    <physiologicalReaction direction="left-to-right" evidence="1">
        <dbReference type="Rhea" id="RHEA:12698"/>
    </physiologicalReaction>
</comment>
<comment type="catalytic activity">
    <reaction evidence="1">
        <text>5-hydroxymethyl-dCMP + ATP = 5-hydroxymethyl-dCDP + ADP</text>
        <dbReference type="Rhea" id="RHEA:62120"/>
        <dbReference type="ChEBI" id="CHEBI:30616"/>
        <dbReference type="ChEBI" id="CHEBI:57962"/>
        <dbReference type="ChEBI" id="CHEBI:145464"/>
        <dbReference type="ChEBI" id="CHEBI:456216"/>
    </reaction>
    <physiologicalReaction direction="left-to-right" evidence="1">
        <dbReference type="Rhea" id="RHEA:62121"/>
    </physiologicalReaction>
</comment>
<comment type="cofactor">
    <cofactor evidence="1">
        <name>Mg(2+)</name>
        <dbReference type="ChEBI" id="CHEBI:18420"/>
    </cofactor>
</comment>
<comment type="subunit">
    <text evidence="1">Homodimer.</text>
</comment>
<comment type="similarity">
    <text evidence="3">Belongs to the dNMP kinase family.</text>
</comment>
<dbReference type="EC" id="2.7.4.-" evidence="1"/>
<dbReference type="EMBL" id="AY303349">
    <property type="protein sequence ID" value="AAP76058.1"/>
    <property type="molecule type" value="Genomic_DNA"/>
</dbReference>
<dbReference type="RefSeq" id="NP_861849.1">
    <property type="nucleotide sequence ID" value="NC_004928.1"/>
</dbReference>
<dbReference type="SMR" id="Q7Y4Y9"/>
<dbReference type="GeneID" id="1494275"/>
<dbReference type="KEGG" id="vg:1494275"/>
<dbReference type="OrthoDB" id="14006at10239"/>
<dbReference type="Proteomes" id="UP000000876">
    <property type="component" value="Genome"/>
</dbReference>
<dbReference type="GO" id="GO:0005524">
    <property type="term" value="F:ATP binding"/>
    <property type="evidence" value="ECO:0007669"/>
    <property type="project" value="UniProtKB-KW"/>
</dbReference>
<dbReference type="GO" id="GO:0050316">
    <property type="term" value="F:dGMP kinase activity"/>
    <property type="evidence" value="ECO:0007669"/>
    <property type="project" value="RHEA"/>
</dbReference>
<dbReference type="GO" id="GO:0004798">
    <property type="term" value="F:dTMP kinase activity"/>
    <property type="evidence" value="ECO:0007669"/>
    <property type="project" value="RHEA"/>
</dbReference>
<dbReference type="Gene3D" id="1.10.238.70">
    <property type="match status" value="1"/>
</dbReference>
<dbReference type="Gene3D" id="3.40.50.300">
    <property type="entry name" value="P-loop containing nucleotide triphosphate hydrolases"/>
    <property type="match status" value="1"/>
</dbReference>
<dbReference type="InterPro" id="IPR048444">
    <property type="entry name" value="DNMK"/>
</dbReference>
<dbReference type="InterPro" id="IPR023191">
    <property type="entry name" value="DNMP_kinase_N"/>
</dbReference>
<dbReference type="InterPro" id="IPR027417">
    <property type="entry name" value="P-loop_NTPase"/>
</dbReference>
<dbReference type="Pfam" id="PF21448">
    <property type="entry name" value="DNMK"/>
    <property type="match status" value="1"/>
</dbReference>
<dbReference type="SUPFAM" id="SSF52540">
    <property type="entry name" value="P-loop containing nucleoside triphosphate hydrolases"/>
    <property type="match status" value="1"/>
</dbReference>
<organismHost>
    <name type="scientific">Escherichia coli</name>
    <dbReference type="NCBI Taxonomy" id="562"/>
</organismHost>
<evidence type="ECO:0000250" key="1">
    <source>
        <dbReference type="UniProtKB" id="P04531"/>
    </source>
</evidence>
<evidence type="ECO:0000250" key="2">
    <source>
        <dbReference type="UniProtKB" id="Q6QGP4"/>
    </source>
</evidence>
<evidence type="ECO:0000305" key="3"/>
<reference key="1">
    <citation type="submission" date="2003-05" db="EMBL/GenBank/DDBJ databases">
        <title>Enterobacteria phage RB69 complete genome.</title>
        <authorList>
            <person name="Petrov V."/>
            <person name="Nolan J."/>
            <person name="Chin D."/>
            <person name="Letarov A."/>
            <person name="Krisch H.M."/>
            <person name="Karam J.D."/>
        </authorList>
    </citation>
    <scope>NUCLEOTIDE SEQUENCE [LARGE SCALE GENOMIC DNA]</scope>
</reference>
<proteinExistence type="inferred from homology"/>